<organism>
    <name type="scientific">Herminiimonas arsenicoxydans</name>
    <dbReference type="NCBI Taxonomy" id="204773"/>
    <lineage>
        <taxon>Bacteria</taxon>
        <taxon>Pseudomonadati</taxon>
        <taxon>Pseudomonadota</taxon>
        <taxon>Betaproteobacteria</taxon>
        <taxon>Burkholderiales</taxon>
        <taxon>Oxalobacteraceae</taxon>
        <taxon>Herminiimonas</taxon>
    </lineage>
</organism>
<name>Y2489_HERAR</name>
<keyword id="KW-1185">Reference proteome</keyword>
<gene>
    <name type="ordered locus">HEAR2489</name>
</gene>
<reference key="1">
    <citation type="journal article" date="2007" name="PLoS Genet.">
        <title>A tale of two oxidation states: bacterial colonization of arsenic-rich environments.</title>
        <authorList>
            <person name="Muller D."/>
            <person name="Medigue C."/>
            <person name="Koechler S."/>
            <person name="Barbe V."/>
            <person name="Barakat M."/>
            <person name="Talla E."/>
            <person name="Bonnefoy V."/>
            <person name="Krin E."/>
            <person name="Arsene-Ploetze F."/>
            <person name="Carapito C."/>
            <person name="Chandler M."/>
            <person name="Cournoyer B."/>
            <person name="Cruveiller S."/>
            <person name="Dossat C."/>
            <person name="Duval S."/>
            <person name="Heymann M."/>
            <person name="Leize E."/>
            <person name="Lieutaud A."/>
            <person name="Lievremont D."/>
            <person name="Makita Y."/>
            <person name="Mangenot S."/>
            <person name="Nitschke W."/>
            <person name="Ortet P."/>
            <person name="Perdrial N."/>
            <person name="Schoepp B."/>
            <person name="Siguier P."/>
            <person name="Simeonova D.D."/>
            <person name="Rouy Z."/>
            <person name="Segurens B."/>
            <person name="Turlin E."/>
            <person name="Vallenet D."/>
            <person name="van Dorsselaer A."/>
            <person name="Weiss S."/>
            <person name="Weissenbach J."/>
            <person name="Lett M.-C."/>
            <person name="Danchin A."/>
            <person name="Bertin P.N."/>
        </authorList>
    </citation>
    <scope>NUCLEOTIDE SEQUENCE [LARGE SCALE GENOMIC DNA]</scope>
    <source>
        <strain>ULPAs1</strain>
    </source>
</reference>
<evidence type="ECO:0000255" key="1">
    <source>
        <dbReference type="HAMAP-Rule" id="MF_01187"/>
    </source>
</evidence>
<dbReference type="EMBL" id="CU207211">
    <property type="protein sequence ID" value="CAL62617.1"/>
    <property type="molecule type" value="Genomic_DNA"/>
</dbReference>
<dbReference type="SMR" id="A4G7Y0"/>
<dbReference type="STRING" id="204773.HEAR2489"/>
<dbReference type="KEGG" id="har:HEAR2489"/>
<dbReference type="eggNOG" id="COG2835">
    <property type="taxonomic scope" value="Bacteria"/>
</dbReference>
<dbReference type="HOGENOM" id="CLU_155659_3_1_4"/>
<dbReference type="OrthoDB" id="9812205at2"/>
<dbReference type="Proteomes" id="UP000006697">
    <property type="component" value="Chromosome"/>
</dbReference>
<dbReference type="GO" id="GO:0005829">
    <property type="term" value="C:cytosol"/>
    <property type="evidence" value="ECO:0007669"/>
    <property type="project" value="TreeGrafter"/>
</dbReference>
<dbReference type="FunFam" id="2.20.25.10:FF:000002">
    <property type="entry name" value="UPF0434 protein YcaR"/>
    <property type="match status" value="1"/>
</dbReference>
<dbReference type="Gene3D" id="2.20.25.10">
    <property type="match status" value="1"/>
</dbReference>
<dbReference type="HAMAP" id="MF_01187">
    <property type="entry name" value="UPF0434"/>
    <property type="match status" value="1"/>
</dbReference>
<dbReference type="InterPro" id="IPR005651">
    <property type="entry name" value="Trm112-like"/>
</dbReference>
<dbReference type="PANTHER" id="PTHR33505:SF4">
    <property type="entry name" value="PROTEIN PREY, MITOCHONDRIAL"/>
    <property type="match status" value="1"/>
</dbReference>
<dbReference type="PANTHER" id="PTHR33505">
    <property type="entry name" value="ZGC:162634"/>
    <property type="match status" value="1"/>
</dbReference>
<dbReference type="Pfam" id="PF03966">
    <property type="entry name" value="Trm112p"/>
    <property type="match status" value="1"/>
</dbReference>
<dbReference type="SUPFAM" id="SSF158997">
    <property type="entry name" value="Trm112p-like"/>
    <property type="match status" value="1"/>
</dbReference>
<sequence length="59" mass="6646">MDTRLLDILVCPLCKGPLEHDKKKQELICKVDKLAYPIRDGIPIMWADQARDLQTPAAG</sequence>
<proteinExistence type="inferred from homology"/>
<feature type="chain" id="PRO_1000065843" description="UPF0434 protein HEAR2489">
    <location>
        <begin position="1"/>
        <end position="59"/>
    </location>
</feature>
<comment type="similarity">
    <text evidence="1">Belongs to the UPF0434 family.</text>
</comment>
<protein>
    <recommendedName>
        <fullName evidence="1">UPF0434 protein HEAR2489</fullName>
    </recommendedName>
</protein>
<accession>A4G7Y0</accession>